<name>DEFB3_RAT</name>
<protein>
    <recommendedName>
        <fullName>Beta-defensin 3</fullName>
        <shortName>BD-3</shortName>
    </recommendedName>
    <alternativeName>
        <fullName>Defensin, beta 3</fullName>
    </alternativeName>
</protein>
<sequence length="63" mass="7082">MRIHYLLFSFLLVLLSPLSAFSKKVYNAVSCMTNGGICWLKCSGTFREIGSCGTRQLKCCKKK</sequence>
<gene>
    <name type="primary">Defb3</name>
</gene>
<organism>
    <name type="scientific">Rattus norvegicus</name>
    <name type="common">Rat</name>
    <dbReference type="NCBI Taxonomy" id="10116"/>
    <lineage>
        <taxon>Eukaryota</taxon>
        <taxon>Metazoa</taxon>
        <taxon>Chordata</taxon>
        <taxon>Craniata</taxon>
        <taxon>Vertebrata</taxon>
        <taxon>Euteleostomi</taxon>
        <taxon>Mammalia</taxon>
        <taxon>Eutheria</taxon>
        <taxon>Euarchontoglires</taxon>
        <taxon>Glires</taxon>
        <taxon>Rodentia</taxon>
        <taxon>Myomorpha</taxon>
        <taxon>Muroidea</taxon>
        <taxon>Muridae</taxon>
        <taxon>Murinae</taxon>
        <taxon>Rattus</taxon>
    </lineage>
</organism>
<dbReference type="EMBL" id="AY621339">
    <property type="protein sequence ID" value="AAT51878.1"/>
    <property type="molecule type" value="mRNA"/>
</dbReference>
<dbReference type="RefSeq" id="NP_001032637.1">
    <property type="nucleotide sequence ID" value="NM_001037548.2"/>
</dbReference>
<dbReference type="SMR" id="Q32ZI4"/>
<dbReference type="FunCoup" id="Q32ZI4">
    <property type="interactions" value="18"/>
</dbReference>
<dbReference type="GeneID" id="641623"/>
<dbReference type="UCSC" id="RGD:1589572">
    <property type="organism name" value="rat"/>
</dbReference>
<dbReference type="AGR" id="RGD:1589572"/>
<dbReference type="CTD" id="27358"/>
<dbReference type="RGD" id="1589572">
    <property type="gene designation" value="Defb3"/>
</dbReference>
<dbReference type="InParanoid" id="Q32ZI4"/>
<dbReference type="PRO" id="PR:Q32ZI4"/>
<dbReference type="Proteomes" id="UP000002494">
    <property type="component" value="Chromosome 16"/>
</dbReference>
<dbReference type="Bgee" id="ENSRNOG00000038126">
    <property type="expression patterns" value="Expressed in esophagus and 14 other cell types or tissues"/>
</dbReference>
<dbReference type="ExpressionAtlas" id="Q32ZI4">
    <property type="expression patterns" value="baseline"/>
</dbReference>
<dbReference type="GO" id="GO:0005615">
    <property type="term" value="C:extracellular space"/>
    <property type="evidence" value="ECO:0000318"/>
    <property type="project" value="GO_Central"/>
</dbReference>
<dbReference type="GO" id="GO:0031731">
    <property type="term" value="F:CCR6 chemokine receptor binding"/>
    <property type="evidence" value="ECO:0000318"/>
    <property type="project" value="GO_Central"/>
</dbReference>
<dbReference type="GO" id="GO:0042056">
    <property type="term" value="F:chemoattractant activity"/>
    <property type="evidence" value="ECO:0000318"/>
    <property type="project" value="GO_Central"/>
</dbReference>
<dbReference type="GO" id="GO:0060326">
    <property type="term" value="P:cell chemotaxis"/>
    <property type="evidence" value="ECO:0000318"/>
    <property type="project" value="GO_Central"/>
</dbReference>
<dbReference type="GO" id="GO:0042742">
    <property type="term" value="P:defense response to bacterium"/>
    <property type="evidence" value="ECO:0000318"/>
    <property type="project" value="GO_Central"/>
</dbReference>
<dbReference type="FunFam" id="3.10.360.10:FF:000001">
    <property type="entry name" value="Beta-defensin 1"/>
    <property type="match status" value="1"/>
</dbReference>
<dbReference type="Gene3D" id="3.10.360.10">
    <property type="entry name" value="Antimicrobial Peptide, Beta-defensin 2, Chain A"/>
    <property type="match status" value="1"/>
</dbReference>
<dbReference type="InterPro" id="IPR001855">
    <property type="entry name" value="Defensin_beta-like"/>
</dbReference>
<dbReference type="PANTHER" id="PTHR20515">
    <property type="entry name" value="BETA-DEFENSIN"/>
    <property type="match status" value="1"/>
</dbReference>
<dbReference type="PANTHER" id="PTHR20515:SF2">
    <property type="entry name" value="DEFENSIN BETA 4A"/>
    <property type="match status" value="1"/>
</dbReference>
<dbReference type="Pfam" id="PF00711">
    <property type="entry name" value="Defensin_beta"/>
    <property type="match status" value="1"/>
</dbReference>
<dbReference type="SUPFAM" id="SSF57392">
    <property type="entry name" value="Defensin-like"/>
    <property type="match status" value="1"/>
</dbReference>
<keyword id="KW-0044">Antibiotic</keyword>
<keyword id="KW-0929">Antimicrobial</keyword>
<keyword id="KW-0165">Cleavage on pair of basic residues</keyword>
<keyword id="KW-0211">Defensin</keyword>
<keyword id="KW-1015">Disulfide bond</keyword>
<keyword id="KW-1185">Reference proteome</keyword>
<keyword id="KW-0964">Secreted</keyword>
<keyword id="KW-0732">Signal</keyword>
<accession>Q32ZI4</accession>
<comment type="function">
    <text evidence="1">Has bactericidal activity.</text>
</comment>
<comment type="subcellular location">
    <subcellularLocation>
        <location evidence="1">Secreted</location>
    </subcellularLocation>
</comment>
<comment type="similarity">
    <text evidence="3">Belongs to the beta-defensin family.</text>
</comment>
<proteinExistence type="inferred from homology"/>
<reference key="1">
    <citation type="journal article" date="2005" name="Physiol. Genomics">
        <title>Cross-species analysis of the mammalian beta-defensin gene family: presence of syntenic gene clusters and preferential expression in the male reproductive tract.</title>
        <authorList>
            <person name="Patil A.A."/>
            <person name="Cai Y."/>
            <person name="Sang Y."/>
            <person name="Blecha F."/>
            <person name="Zhang G."/>
        </authorList>
    </citation>
    <scope>NUCLEOTIDE SEQUENCE [MRNA]</scope>
</reference>
<feature type="signal peptide" evidence="2">
    <location>
        <begin position="1"/>
        <end position="20"/>
    </location>
</feature>
<feature type="propeptide" id="PRO_0000352691" evidence="2">
    <location>
        <begin position="21"/>
        <end position="22"/>
    </location>
</feature>
<feature type="peptide" id="PRO_0000352692" description="Beta-defensin 3">
    <location>
        <begin position="23"/>
        <end position="63"/>
    </location>
</feature>
<feature type="disulfide bond" evidence="1">
    <location>
        <begin position="31"/>
        <end position="59"/>
    </location>
</feature>
<feature type="disulfide bond" evidence="1">
    <location>
        <begin position="38"/>
        <end position="52"/>
    </location>
</feature>
<feature type="disulfide bond" evidence="1">
    <location>
        <begin position="42"/>
        <end position="60"/>
    </location>
</feature>
<evidence type="ECO:0000250" key="1"/>
<evidence type="ECO:0000255" key="2"/>
<evidence type="ECO:0000305" key="3"/>